<name>TMAR_SALEP</name>
<dbReference type="EMBL" id="AM933172">
    <property type="protein sequence ID" value="CAR33637.1"/>
    <property type="molecule type" value="Genomic_DNA"/>
</dbReference>
<dbReference type="RefSeq" id="WP_000450405.1">
    <property type="nucleotide sequence ID" value="NC_011294.1"/>
</dbReference>
<dbReference type="SMR" id="B5QZJ9"/>
<dbReference type="KEGG" id="set:SEN2057"/>
<dbReference type="HOGENOM" id="CLU_153146_0_0_6"/>
<dbReference type="Proteomes" id="UP000000613">
    <property type="component" value="Chromosome"/>
</dbReference>
<dbReference type="GO" id="GO:0005829">
    <property type="term" value="C:cytosol"/>
    <property type="evidence" value="ECO:0007669"/>
    <property type="project" value="TreeGrafter"/>
</dbReference>
<dbReference type="HAMAP" id="MF_00683">
    <property type="entry name" value="Pole_loc_TmaR"/>
    <property type="match status" value="1"/>
</dbReference>
<dbReference type="InterPro" id="IPR007458">
    <property type="entry name" value="DUF496"/>
</dbReference>
<dbReference type="InterPro" id="IPR053375">
    <property type="entry name" value="UPF0265"/>
</dbReference>
<dbReference type="NCBIfam" id="NF003844">
    <property type="entry name" value="PRK05423.1"/>
    <property type="match status" value="1"/>
</dbReference>
<dbReference type="NCBIfam" id="NF040881">
    <property type="entry name" value="PTS_reg_TmaR"/>
    <property type="match status" value="1"/>
</dbReference>
<dbReference type="PANTHER" id="PTHR39591">
    <property type="entry name" value="UPF0265 PROTEIN YEEX"/>
    <property type="match status" value="1"/>
</dbReference>
<dbReference type="PANTHER" id="PTHR39591:SF1">
    <property type="entry name" value="UPF0265 PROTEIN YEEX"/>
    <property type="match status" value="1"/>
</dbReference>
<dbReference type="Pfam" id="PF04363">
    <property type="entry name" value="DUF496"/>
    <property type="match status" value="1"/>
</dbReference>
<dbReference type="PIRSF" id="PIRSF028773">
    <property type="entry name" value="UCP028773"/>
    <property type="match status" value="1"/>
</dbReference>
<reference key="1">
    <citation type="journal article" date="2008" name="Genome Res.">
        <title>Comparative genome analysis of Salmonella enteritidis PT4 and Salmonella gallinarum 287/91 provides insights into evolutionary and host adaptation pathways.</title>
        <authorList>
            <person name="Thomson N.R."/>
            <person name="Clayton D.J."/>
            <person name="Windhorst D."/>
            <person name="Vernikos G."/>
            <person name="Davidson S."/>
            <person name="Churcher C."/>
            <person name="Quail M.A."/>
            <person name="Stevens M."/>
            <person name="Jones M.A."/>
            <person name="Watson M."/>
            <person name="Barron A."/>
            <person name="Layton A."/>
            <person name="Pickard D."/>
            <person name="Kingsley R.A."/>
            <person name="Bignell A."/>
            <person name="Clark L."/>
            <person name="Harris B."/>
            <person name="Ormond D."/>
            <person name="Abdellah Z."/>
            <person name="Brooks K."/>
            <person name="Cherevach I."/>
            <person name="Chillingworth T."/>
            <person name="Woodward J."/>
            <person name="Norberczak H."/>
            <person name="Lord A."/>
            <person name="Arrowsmith C."/>
            <person name="Jagels K."/>
            <person name="Moule S."/>
            <person name="Mungall K."/>
            <person name="Saunders M."/>
            <person name="Whitehead S."/>
            <person name="Chabalgoity J.A."/>
            <person name="Maskell D."/>
            <person name="Humphreys T."/>
            <person name="Roberts M."/>
            <person name="Barrow P.A."/>
            <person name="Dougan G."/>
            <person name="Parkhill J."/>
        </authorList>
    </citation>
    <scope>NUCLEOTIDE SEQUENCE [LARGE SCALE GENOMIC DNA]</scope>
    <source>
        <strain>P125109</strain>
    </source>
</reference>
<evidence type="ECO:0000255" key="1">
    <source>
        <dbReference type="HAMAP-Rule" id="MF_00683"/>
    </source>
</evidence>
<proteinExistence type="inferred from homology"/>
<gene>
    <name evidence="1" type="primary">tmaR</name>
    <name type="ordered locus">SEN2057</name>
</gene>
<comment type="function">
    <text evidence="1">Pole-localizer protein involved in the regulation of several cellular processes.</text>
</comment>
<comment type="subcellular location">
    <subcellularLocation>
        <location evidence="1">Cytoplasm</location>
    </subcellularLocation>
    <text evidence="1">Forms clusters that localize mainly near one pole of the cell.</text>
</comment>
<comment type="similarity">
    <text evidence="1">Belongs to the pole-localizer TmaR family.</text>
</comment>
<keyword id="KW-0175">Coiled coil</keyword>
<keyword id="KW-0963">Cytoplasm</keyword>
<organism>
    <name type="scientific">Salmonella enteritidis PT4 (strain P125109)</name>
    <dbReference type="NCBI Taxonomy" id="550537"/>
    <lineage>
        <taxon>Bacteria</taxon>
        <taxon>Pseudomonadati</taxon>
        <taxon>Pseudomonadota</taxon>
        <taxon>Gammaproteobacteria</taxon>
        <taxon>Enterobacterales</taxon>
        <taxon>Enterobacteriaceae</taxon>
        <taxon>Salmonella</taxon>
    </lineage>
</organism>
<feature type="chain" id="PRO_1000131773" description="Pole-localizer protein TmaR">
    <location>
        <begin position="1"/>
        <end position="111"/>
    </location>
</feature>
<feature type="coiled-coil region" evidence="1">
    <location>
        <begin position="14"/>
        <end position="41"/>
    </location>
</feature>
<protein>
    <recommendedName>
        <fullName evidence="1">Pole-localizer protein TmaR</fullName>
    </recommendedName>
</protein>
<accession>B5QZJ9</accession>
<sequence length="111" mass="13073">METTKPSFQDVLEFVRLFRRKNKLQREIQDIEKKIRDNQKRVLLLDNLSDYIKPGMSVEAIQGIIASMKSDYEDRVDDYIIKNAEISKERRDISKKLKAMGEMKHADVKAE</sequence>